<feature type="signal peptide" evidence="2">
    <location>
        <begin position="1"/>
        <end position="16"/>
    </location>
</feature>
<feature type="chain" id="PRO_0000011197" description="Globin CTT-VIIB-5/CTT-VIIB-9">
    <location>
        <begin position="17"/>
        <end position="161"/>
    </location>
</feature>
<feature type="domain" description="Globin" evidence="1">
    <location>
        <begin position="18"/>
        <end position="161"/>
    </location>
</feature>
<feature type="binding site" description="distal binding residue" evidence="1">
    <location>
        <position position="76"/>
    </location>
    <ligand>
        <name>heme b</name>
        <dbReference type="ChEBI" id="CHEBI:60344"/>
    </ligand>
    <ligandPart>
        <name>Fe</name>
        <dbReference type="ChEBI" id="CHEBI:18248"/>
    </ligandPart>
</feature>
<feature type="binding site" description="proximal binding residue" evidence="1">
    <location>
        <position position="111"/>
    </location>
    <ligand>
        <name>heme b</name>
        <dbReference type="ChEBI" id="CHEBI:60344"/>
    </ligand>
    <ligandPart>
        <name>Fe</name>
        <dbReference type="ChEBI" id="CHEBI:18248"/>
    </ligandPart>
</feature>
<organism>
    <name type="scientific">Chironomus thummi thummi</name>
    <name type="common">Midge</name>
    <dbReference type="NCBI Taxonomy" id="7155"/>
    <lineage>
        <taxon>Eukaryota</taxon>
        <taxon>Metazoa</taxon>
        <taxon>Ecdysozoa</taxon>
        <taxon>Arthropoda</taxon>
        <taxon>Hexapoda</taxon>
        <taxon>Insecta</taxon>
        <taxon>Pterygota</taxon>
        <taxon>Neoptera</taxon>
        <taxon>Endopterygota</taxon>
        <taxon>Diptera</taxon>
        <taxon>Nematocera</taxon>
        <taxon>Chironomoidea</taxon>
        <taxon>Chironomidae</taxon>
        <taxon>Chironominae</taxon>
        <taxon>Chironomus</taxon>
    </lineage>
</organism>
<sequence>MKFFAVLALCIVGAIASPLTADEASLVQSSWKAVSHNEVEILAAVFAAYPDIQNKFSQFAGKDLASIKDTGAFATHATRIVSFLSEVIALSGNTSNAAAVNSLVSKLGDDHKARGVSAAQFGEFRTALVAYLQANVSWGDNVAAAWNKALDNTFAIVVPRL</sequence>
<comment type="subunit">
    <text>Homodimer.</text>
</comment>
<comment type="miscellaneous">
    <text>There are at least 12 different components in Midge globin.</text>
</comment>
<comment type="miscellaneous">
    <text>There are at least nine genes for VIIB variants.</text>
</comment>
<comment type="similarity">
    <text evidence="1">Belongs to the globin family.</text>
</comment>
<evidence type="ECO:0000255" key="1">
    <source>
        <dbReference type="PROSITE-ProRule" id="PRU00238"/>
    </source>
</evidence>
<evidence type="ECO:0000269" key="2">
    <source>
    </source>
</evidence>
<accession>P84298</accession>
<accession>P02225</accession>
<accession>P11583</accession>
<protein>
    <recommendedName>
        <fullName>Globin CTT-VIIB-5/CTT-VIIB-9</fullName>
    </recommendedName>
</protein>
<proteinExistence type="evidence at protein level"/>
<name>GLB75_CHITH</name>
<reference key="1">
    <citation type="journal article" date="1988" name="Gene">
        <title>Multiple clustered genes of the haemoglobin VIIB subfamily of Chironomus thummi thummi (Diptera).</title>
        <authorList>
            <person name="Trewitt P.M."/>
            <person name="Saffarini D.A."/>
            <person name="Bergtrom G."/>
        </authorList>
    </citation>
    <scope>NUCLEOTIDE SEQUENCE [GENOMIC DNA] (CTT-7B5 AND CTT-7B9)</scope>
    <source>
        <tissue>Larva</tissue>
    </source>
</reference>
<reference key="2">
    <citation type="journal article" date="1995" name="J. Mol. Evol.">
        <title>Molecular evolutionary analysis of the YWVZ/7B globin gene cluster of the insect Chironomus thummi.</title>
        <authorList>
            <person name="Trewitt P.M."/>
            <person name="Luhm R.A."/>
            <person name="Samad F."/>
            <person name="Ramakrishnan S."/>
            <person name="Kao W.-Y."/>
            <person name="Bergtrom G."/>
        </authorList>
    </citation>
    <scope>NUCLEOTIDE SEQUENCE [GENOMIC DNA] (CTT-7B5 AND CTT-7B9)</scope>
    <source>
        <tissue>Larva</tissue>
    </source>
</reference>
<reference key="3">
    <citation type="journal article" date="1995" name="Gene">
        <title>Sequences of globin 6 gene alleles and linkage of globin 6 and 7B genes in the insect Chironomus thummi thummi.</title>
        <authorList>
            <person name="Kao W.-Y."/>
            <person name="Bergtrom G."/>
        </authorList>
    </citation>
    <scope>NUCLEOTIDE SEQUENCE [GENOMIC DNA] (CTT-7B9)</scope>
</reference>
<reference key="4">
    <citation type="journal article" date="1979" name="Hoppe-Seyler's Z. Physiol. Chem.">
        <title>Hemoglobins, XXVI. Analysis of the primary structure of the dimeric insect haemoglobin CTT VIIB (Erythrocruorin) from Chironomus thummi thummi, Diptera.</title>
        <authorList>
            <person name="Sladic-Simic D."/>
            <person name="Kleinschmidt T."/>
            <person name="Braunitzer G."/>
        </authorList>
    </citation>
    <scope>PROTEIN SEQUENCE OF 17-161 (MIXTURE OF ISOZYMES)</scope>
</reference>
<keyword id="KW-0903">Direct protein sequencing</keyword>
<keyword id="KW-0349">Heme</keyword>
<keyword id="KW-0408">Iron</keyword>
<keyword id="KW-0479">Metal-binding</keyword>
<keyword id="KW-0561">Oxygen transport</keyword>
<keyword id="KW-0732">Signal</keyword>
<keyword id="KW-0813">Transport</keyword>
<dbReference type="EMBL" id="U07703">
    <property type="protein sequence ID" value="AAA85487.1"/>
    <property type="molecule type" value="Genomic_DNA"/>
</dbReference>
<dbReference type="EMBL" id="U07703">
    <property type="protein sequence ID" value="AAA85489.1"/>
    <property type="molecule type" value="Genomic_DNA"/>
</dbReference>
<dbReference type="EMBL" id="U01342">
    <property type="protein sequence ID" value="AAA69815.1"/>
    <property type="molecule type" value="Genomic_DNA"/>
</dbReference>
<dbReference type="PIR" id="A02547">
    <property type="entry name" value="GGICE8"/>
</dbReference>
<dbReference type="PIR" id="JT0349">
    <property type="entry name" value="JT0349"/>
</dbReference>
<dbReference type="SMR" id="P84298"/>
<dbReference type="Allergome" id="207">
    <property type="allergen name" value="Chi t 3"/>
</dbReference>
<dbReference type="Allergome" id="213">
    <property type="allergen name" value="Chi t 3.0701"/>
</dbReference>
<dbReference type="GO" id="GO:0005576">
    <property type="term" value="C:extracellular region"/>
    <property type="evidence" value="ECO:0007669"/>
    <property type="project" value="InterPro"/>
</dbReference>
<dbReference type="GO" id="GO:0005833">
    <property type="term" value="C:hemoglobin complex"/>
    <property type="evidence" value="ECO:0007669"/>
    <property type="project" value="InterPro"/>
</dbReference>
<dbReference type="GO" id="GO:0020037">
    <property type="term" value="F:heme binding"/>
    <property type="evidence" value="ECO:0007669"/>
    <property type="project" value="InterPro"/>
</dbReference>
<dbReference type="GO" id="GO:0046872">
    <property type="term" value="F:metal ion binding"/>
    <property type="evidence" value="ECO:0007669"/>
    <property type="project" value="UniProtKB-KW"/>
</dbReference>
<dbReference type="GO" id="GO:0019825">
    <property type="term" value="F:oxygen binding"/>
    <property type="evidence" value="ECO:0007669"/>
    <property type="project" value="InterPro"/>
</dbReference>
<dbReference type="GO" id="GO:0005344">
    <property type="term" value="F:oxygen carrier activity"/>
    <property type="evidence" value="ECO:0007669"/>
    <property type="project" value="UniProtKB-KW"/>
</dbReference>
<dbReference type="CDD" id="cd01040">
    <property type="entry name" value="Mb-like"/>
    <property type="match status" value="1"/>
</dbReference>
<dbReference type="Gene3D" id="1.10.490.10">
    <property type="entry name" value="Globins"/>
    <property type="match status" value="1"/>
</dbReference>
<dbReference type="InterPro" id="IPR002336">
    <property type="entry name" value="Erythrocruorin"/>
</dbReference>
<dbReference type="InterPro" id="IPR000971">
    <property type="entry name" value="Globin"/>
</dbReference>
<dbReference type="InterPro" id="IPR009050">
    <property type="entry name" value="Globin-like_sf"/>
</dbReference>
<dbReference type="InterPro" id="IPR012292">
    <property type="entry name" value="Globin/Proto"/>
</dbReference>
<dbReference type="InterPro" id="IPR044399">
    <property type="entry name" value="Mb-like_M"/>
</dbReference>
<dbReference type="PANTHER" id="PTHR47217">
    <property type="entry name" value="GLOBIN-LIKE PROTEIN"/>
    <property type="match status" value="1"/>
</dbReference>
<dbReference type="PANTHER" id="PTHR47217:SF1">
    <property type="entry name" value="GLOBIN-LIKE PROTEIN"/>
    <property type="match status" value="1"/>
</dbReference>
<dbReference type="Pfam" id="PF00042">
    <property type="entry name" value="Globin"/>
    <property type="match status" value="1"/>
</dbReference>
<dbReference type="PRINTS" id="PR00611">
    <property type="entry name" value="ERYTHCRUORIN"/>
</dbReference>
<dbReference type="SUPFAM" id="SSF46458">
    <property type="entry name" value="Globin-like"/>
    <property type="match status" value="1"/>
</dbReference>
<dbReference type="PROSITE" id="PS01033">
    <property type="entry name" value="GLOBIN"/>
    <property type="match status" value="1"/>
</dbReference>
<gene>
    <name type="primary">CTT-7B5</name>
</gene>
<gene>
    <name type="primary">CTT-7B9</name>
</gene>